<reference key="1">
    <citation type="journal article" date="2007" name="Nat. Biotechnol.">
        <title>Complete genome sequence of the erythromycin-producing bacterium Saccharopolyspora erythraea NRRL23338.</title>
        <authorList>
            <person name="Oliynyk M."/>
            <person name="Samborskyy M."/>
            <person name="Lester J.B."/>
            <person name="Mironenko T."/>
            <person name="Scott N."/>
            <person name="Dickens S."/>
            <person name="Haydock S.F."/>
            <person name="Leadlay P.F."/>
        </authorList>
    </citation>
    <scope>NUCLEOTIDE SEQUENCE [LARGE SCALE GENOMIC DNA]</scope>
    <source>
        <strain>ATCC 11635 / DSM 40517 / JCM 4748 / NBRC 13426 / NCIMB 8594 / NRRL 2338</strain>
    </source>
</reference>
<comment type="function">
    <text evidence="1">Transaldolase is important for the balance of metabolites in the pentose-phosphate pathway.</text>
</comment>
<comment type="catalytic activity">
    <reaction evidence="1">
        <text>D-sedoheptulose 7-phosphate + D-glyceraldehyde 3-phosphate = D-erythrose 4-phosphate + beta-D-fructose 6-phosphate</text>
        <dbReference type="Rhea" id="RHEA:17053"/>
        <dbReference type="ChEBI" id="CHEBI:16897"/>
        <dbReference type="ChEBI" id="CHEBI:57483"/>
        <dbReference type="ChEBI" id="CHEBI:57634"/>
        <dbReference type="ChEBI" id="CHEBI:59776"/>
        <dbReference type="EC" id="2.2.1.2"/>
    </reaction>
</comment>
<comment type="pathway">
    <text evidence="1">Carbohydrate degradation; pentose phosphate pathway; D-glyceraldehyde 3-phosphate and beta-D-fructose 6-phosphate from D-ribose 5-phosphate and D-xylulose 5-phosphate (non-oxidative stage): step 2/3.</text>
</comment>
<comment type="subcellular location">
    <subcellularLocation>
        <location evidence="1">Cytoplasm</location>
    </subcellularLocation>
</comment>
<comment type="similarity">
    <text evidence="1">Belongs to the transaldolase family. Type 2 subfamily.</text>
</comment>
<dbReference type="EC" id="2.2.1.2" evidence="1"/>
<dbReference type="EMBL" id="AM420293">
    <property type="protein sequence ID" value="CAM01465.1"/>
    <property type="molecule type" value="Genomic_DNA"/>
</dbReference>
<dbReference type="RefSeq" id="WP_009942962.1">
    <property type="nucleotide sequence ID" value="NC_009142.1"/>
</dbReference>
<dbReference type="SMR" id="A4FBP0"/>
<dbReference type="STRING" id="405948.SACE_2159"/>
<dbReference type="KEGG" id="sen:SACE_2159"/>
<dbReference type="eggNOG" id="COG0176">
    <property type="taxonomic scope" value="Bacteria"/>
</dbReference>
<dbReference type="HOGENOM" id="CLU_050771_1_0_11"/>
<dbReference type="OrthoDB" id="9809101at2"/>
<dbReference type="UniPathway" id="UPA00115">
    <property type="reaction ID" value="UER00414"/>
</dbReference>
<dbReference type="Proteomes" id="UP000006728">
    <property type="component" value="Chromosome"/>
</dbReference>
<dbReference type="GO" id="GO:0005737">
    <property type="term" value="C:cytoplasm"/>
    <property type="evidence" value="ECO:0007669"/>
    <property type="project" value="UniProtKB-SubCell"/>
</dbReference>
<dbReference type="GO" id="GO:0004801">
    <property type="term" value="F:transaldolase activity"/>
    <property type="evidence" value="ECO:0007669"/>
    <property type="project" value="UniProtKB-UniRule"/>
</dbReference>
<dbReference type="GO" id="GO:0005975">
    <property type="term" value="P:carbohydrate metabolic process"/>
    <property type="evidence" value="ECO:0007669"/>
    <property type="project" value="InterPro"/>
</dbReference>
<dbReference type="GO" id="GO:0006098">
    <property type="term" value="P:pentose-phosphate shunt"/>
    <property type="evidence" value="ECO:0007669"/>
    <property type="project" value="UniProtKB-UniRule"/>
</dbReference>
<dbReference type="CDD" id="cd00955">
    <property type="entry name" value="Transaldolase_like"/>
    <property type="match status" value="1"/>
</dbReference>
<dbReference type="Gene3D" id="3.20.20.70">
    <property type="entry name" value="Aldolase class I"/>
    <property type="match status" value="1"/>
</dbReference>
<dbReference type="HAMAP" id="MF_00493">
    <property type="entry name" value="Transaldolase_2"/>
    <property type="match status" value="1"/>
</dbReference>
<dbReference type="InterPro" id="IPR013785">
    <property type="entry name" value="Aldolase_TIM"/>
</dbReference>
<dbReference type="InterPro" id="IPR001585">
    <property type="entry name" value="TAL/FSA"/>
</dbReference>
<dbReference type="InterPro" id="IPR004732">
    <property type="entry name" value="Transaldolase_2"/>
</dbReference>
<dbReference type="InterPro" id="IPR018225">
    <property type="entry name" value="Transaldolase_AS"/>
</dbReference>
<dbReference type="NCBIfam" id="NF002881">
    <property type="entry name" value="PRK03343.1"/>
    <property type="match status" value="1"/>
</dbReference>
<dbReference type="NCBIfam" id="TIGR00876">
    <property type="entry name" value="tal_mycobact"/>
    <property type="match status" value="1"/>
</dbReference>
<dbReference type="PANTHER" id="PTHR10683">
    <property type="entry name" value="TRANSALDOLASE"/>
    <property type="match status" value="1"/>
</dbReference>
<dbReference type="PANTHER" id="PTHR10683:SF31">
    <property type="entry name" value="TRANSALDOLASE"/>
    <property type="match status" value="1"/>
</dbReference>
<dbReference type="Pfam" id="PF00923">
    <property type="entry name" value="TAL_FSA"/>
    <property type="match status" value="1"/>
</dbReference>
<dbReference type="PIRSF" id="PIRSF036915">
    <property type="entry name" value="Trnald_Bac_Plnt"/>
    <property type="match status" value="1"/>
</dbReference>
<dbReference type="SUPFAM" id="SSF51569">
    <property type="entry name" value="Aldolase"/>
    <property type="match status" value="1"/>
</dbReference>
<dbReference type="PROSITE" id="PS01054">
    <property type="entry name" value="TRANSALDOLASE_1"/>
    <property type="match status" value="1"/>
</dbReference>
<dbReference type="PROSITE" id="PS00958">
    <property type="entry name" value="TRANSALDOLASE_2"/>
    <property type="match status" value="1"/>
</dbReference>
<protein>
    <recommendedName>
        <fullName evidence="1">Transaldolase</fullName>
        <ecNumber evidence="1">2.2.1.2</ecNumber>
    </recommendedName>
</protein>
<accession>A4FBP0</accession>
<keyword id="KW-0963">Cytoplasm</keyword>
<keyword id="KW-0570">Pentose shunt</keyword>
<keyword id="KW-1185">Reference proteome</keyword>
<keyword id="KW-0704">Schiff base</keyword>
<keyword id="KW-0808">Transferase</keyword>
<evidence type="ECO:0000255" key="1">
    <source>
        <dbReference type="HAMAP-Rule" id="MF_00493"/>
    </source>
</evidence>
<feature type="chain" id="PRO_1000126271" description="Transaldolase">
    <location>
        <begin position="1"/>
        <end position="366"/>
    </location>
</feature>
<feature type="active site" description="Schiff-base intermediate with substrate" evidence="1">
    <location>
        <position position="140"/>
    </location>
</feature>
<organism>
    <name type="scientific">Saccharopolyspora erythraea (strain ATCC 11635 / DSM 40517 / JCM 4748 / NBRC 13426 / NCIMB 8594 / NRRL 2338)</name>
    <dbReference type="NCBI Taxonomy" id="405948"/>
    <lineage>
        <taxon>Bacteria</taxon>
        <taxon>Bacillati</taxon>
        <taxon>Actinomycetota</taxon>
        <taxon>Actinomycetes</taxon>
        <taxon>Pseudonocardiales</taxon>
        <taxon>Pseudonocardiaceae</taxon>
        <taxon>Saccharopolyspora</taxon>
    </lineage>
</organism>
<proteinExistence type="inferred from homology"/>
<gene>
    <name evidence="1" type="primary">tal</name>
    <name type="ordered locus">SACE_2159</name>
</gene>
<name>TAL_SACEN</name>
<sequence>MTTNSNLEALSDAGVSIWLDDLSRKRINSGNLAELISDYAVVGVTSNPTIFAKALSNAADYDEQVRELAARGASVDDAVRELTTRDIREAADIFRNIYEAGHDGRVSLEVDPRLAHDTERTVAEALDLWKAVDRPNLMVKIPATVEGLPAITRVLAEGVSVNVTLIFSVERYRDVMDAYLAGLEQAKANGHDLARIASVASFFVSRVDTEIDKRLESVEGGQELRGKAAIANARLAYAAYEEVFASDRFKALAAEGGKPQRPLWASTGVKDPSYSDTRYVDELVAPNTVNTMPEATLFASADHADVRGDQVSGKAAESQQVFDSLSAAGIDLDDVFAVLEREGVDKFEKSWEELLQTVREQLDQAK</sequence>